<keyword id="KW-0012">Acyltransferase</keyword>
<keyword id="KW-0133">Cell shape</keyword>
<keyword id="KW-0961">Cell wall biogenesis/degradation</keyword>
<keyword id="KW-0573">Peptidoglycan synthesis</keyword>
<keyword id="KW-0574">Periplasm</keyword>
<keyword id="KW-1185">Reference proteome</keyword>
<keyword id="KW-0732">Signal</keyword>
<keyword id="KW-0808">Transferase</keyword>
<sequence>MRRVVRYLSVVVAITLMLTAESVSIATAAVPPLQPIPGVASVSPANGAVVGVAHPVVVTFTTPVTDRRAVERSIRISTPHNTTGHFEWVASNVVRWVPHRYWPPHTRVSVGVQELTEGFETGDALIGVASISAHTFTVSRNGEVLRTMPASLGKPSRPTPIGSFHAMSKERTVVMDSRTIGIPLNSSDGYLLTAHYAVRVTWSGVYVHSAPWSVNSQGYANVSHGCINLSPDNAAWYFDAVTVGDPIEVVG</sequence>
<dbReference type="EC" id="2.3.2.-"/>
<dbReference type="EMBL" id="AE000516">
    <property type="protein sequence ID" value="AAK44348.1"/>
    <property type="status" value="ALT_INIT"/>
    <property type="molecule type" value="Genomic_DNA"/>
</dbReference>
<dbReference type="SMR" id="Q7DAG3"/>
<dbReference type="KEGG" id="mtc:MT0125"/>
<dbReference type="PATRIC" id="fig|83331.31.peg.132"/>
<dbReference type="HOGENOM" id="CLU_039404_0_2_11"/>
<dbReference type="UniPathway" id="UPA00219"/>
<dbReference type="Proteomes" id="UP000001020">
    <property type="component" value="Chromosome"/>
</dbReference>
<dbReference type="GO" id="GO:0005576">
    <property type="term" value="C:extracellular region"/>
    <property type="evidence" value="ECO:0007669"/>
    <property type="project" value="TreeGrafter"/>
</dbReference>
<dbReference type="GO" id="GO:0042597">
    <property type="term" value="C:periplasmic space"/>
    <property type="evidence" value="ECO:0007669"/>
    <property type="project" value="UniProtKB-SubCell"/>
</dbReference>
<dbReference type="GO" id="GO:0016746">
    <property type="term" value="F:acyltransferase activity"/>
    <property type="evidence" value="ECO:0007669"/>
    <property type="project" value="UniProtKB-KW"/>
</dbReference>
<dbReference type="GO" id="GO:0071972">
    <property type="term" value="F:peptidoglycan L,D-transpeptidase activity"/>
    <property type="evidence" value="ECO:0007669"/>
    <property type="project" value="TreeGrafter"/>
</dbReference>
<dbReference type="GO" id="GO:0071555">
    <property type="term" value="P:cell wall organization"/>
    <property type="evidence" value="ECO:0007669"/>
    <property type="project" value="UniProtKB-KW"/>
</dbReference>
<dbReference type="GO" id="GO:0018104">
    <property type="term" value="P:peptidoglycan-protein cross-linking"/>
    <property type="evidence" value="ECO:0007669"/>
    <property type="project" value="TreeGrafter"/>
</dbReference>
<dbReference type="GO" id="GO:0008360">
    <property type="term" value="P:regulation of cell shape"/>
    <property type="evidence" value="ECO:0007669"/>
    <property type="project" value="UniProtKB-KW"/>
</dbReference>
<dbReference type="CDD" id="cd16913">
    <property type="entry name" value="YkuD_like"/>
    <property type="match status" value="1"/>
</dbReference>
<dbReference type="FunFam" id="2.40.440.10:FF:000008">
    <property type="entry name" value="L,D-transpeptidase 1"/>
    <property type="match status" value="1"/>
</dbReference>
<dbReference type="Gene3D" id="2.60.40.3710">
    <property type="match status" value="1"/>
</dbReference>
<dbReference type="Gene3D" id="2.40.440.10">
    <property type="entry name" value="L,D-transpeptidase catalytic domain-like"/>
    <property type="match status" value="1"/>
</dbReference>
<dbReference type="InterPro" id="IPR041280">
    <property type="entry name" value="Big_10"/>
</dbReference>
<dbReference type="InterPro" id="IPR050979">
    <property type="entry name" value="LD-transpeptidase"/>
</dbReference>
<dbReference type="InterPro" id="IPR005490">
    <property type="entry name" value="LD_TPept_cat_dom"/>
</dbReference>
<dbReference type="InterPro" id="IPR038063">
    <property type="entry name" value="Transpep_catalytic_dom"/>
</dbReference>
<dbReference type="PANTHER" id="PTHR30582">
    <property type="entry name" value="L,D-TRANSPEPTIDASE"/>
    <property type="match status" value="1"/>
</dbReference>
<dbReference type="PANTHER" id="PTHR30582:SF2">
    <property type="entry name" value="L,D-TRANSPEPTIDASE YCIB-RELATED"/>
    <property type="match status" value="1"/>
</dbReference>
<dbReference type="Pfam" id="PF17964">
    <property type="entry name" value="Big_10"/>
    <property type="match status" value="1"/>
</dbReference>
<dbReference type="Pfam" id="PF03734">
    <property type="entry name" value="YkuD"/>
    <property type="match status" value="1"/>
</dbReference>
<dbReference type="SUPFAM" id="SSF141523">
    <property type="entry name" value="L,D-transpeptidase catalytic domain-like"/>
    <property type="match status" value="1"/>
</dbReference>
<dbReference type="PROSITE" id="PS52029">
    <property type="entry name" value="LD_TPASE"/>
    <property type="match status" value="1"/>
</dbReference>
<protein>
    <recommendedName>
        <fullName>L,D-transpeptidase 1</fullName>
        <shortName>LDT 1</shortName>
        <ecNumber>2.3.2.-</ecNumber>
    </recommendedName>
    <alternativeName>
        <fullName>Ldt(Mt1)</fullName>
    </alternativeName>
</protein>
<gene>
    <name type="primary">ldtA</name>
    <name type="ordered locus">MT0125</name>
</gene>
<organism>
    <name type="scientific">Mycobacterium tuberculosis (strain CDC 1551 / Oshkosh)</name>
    <dbReference type="NCBI Taxonomy" id="83331"/>
    <lineage>
        <taxon>Bacteria</taxon>
        <taxon>Bacillati</taxon>
        <taxon>Actinomycetota</taxon>
        <taxon>Actinomycetes</taxon>
        <taxon>Mycobacteriales</taxon>
        <taxon>Mycobacteriaceae</taxon>
        <taxon>Mycobacterium</taxon>
        <taxon>Mycobacterium tuberculosis complex</taxon>
    </lineage>
</organism>
<feature type="signal peptide" evidence="2">
    <location>
        <begin position="1"/>
        <end position="28"/>
    </location>
</feature>
<feature type="chain" id="PRO_0000430331" description="L,D-transpeptidase 1">
    <location>
        <begin position="29"/>
        <end position="251"/>
    </location>
</feature>
<feature type="domain" description="L,D-TPase catalytic" evidence="3">
    <location>
        <begin position="125"/>
        <end position="250"/>
    </location>
</feature>
<feature type="active site" description="Proton donor/acceptor" evidence="3">
    <location>
        <position position="208"/>
    </location>
</feature>
<feature type="active site" description="Nucleophile" evidence="3">
    <location>
        <position position="226"/>
    </location>
</feature>
<feature type="binding site" evidence="1">
    <location>
        <position position="190"/>
    </location>
    <ligand>
        <name>substrate</name>
    </ligand>
</feature>
<feature type="binding site" evidence="1">
    <location>
        <begin position="203"/>
        <end position="204"/>
    </location>
    <ligand>
        <name>substrate</name>
    </ligand>
</feature>
<feature type="binding site" evidence="1">
    <location>
        <position position="228"/>
    </location>
    <ligand>
        <name>substrate</name>
    </ligand>
</feature>
<feature type="site" description="Binds to carbapenem drug (covalent)" evidence="1">
    <location>
        <position position="226"/>
    </location>
</feature>
<name>LDT1_MYCTO</name>
<accession>Q7DAG3</accession>
<comment type="function">
    <text evidence="1">Generates 3-&gt;3 cross-links in peptidoglycan, catalyzing the cleavage of the mDap(3)-D-Ala(4) bond of a tetrapeptide donor stem and the formation of a bond between the carbonyl of mDap(3) of the donor stem and the side chain of mDap(3) of the acceptor stem. Is specific for donor substrates containing a stem tetrapeptide since it cannot use pentapeptide stems (By similarity).</text>
</comment>
<comment type="activity regulation">
    <text evidence="1">Is irreversibly inactivated by the beta-lactams carbapenems via the formation of a covalent adduct resulting from acylation of the catalytic Cys.</text>
</comment>
<comment type="pathway">
    <text>Cell wall biogenesis; peptidoglycan biosynthesis.</text>
</comment>
<comment type="subunit">
    <text evidence="1">Monomer.</text>
</comment>
<comment type="subcellular location">
    <subcellularLocation>
        <location evidence="5">Periplasm</location>
    </subcellularLocation>
</comment>
<comment type="disruption phenotype">
    <text evidence="4">Lack of this gene alone does not alter in vitro and in vivo growth rate or colony and cell shape and morphology. But loss of both LdtMt1 and LdtMt2 severely alters cellular shape, intracellular morphology, physiology and virulence: the length of mutant cells are shorter than wild-type, they have deep surface depressions and bulges, they possess large unstained vacuole-like structures, the thickness of the peptidoglycan layer is smaller, the protein localization is altered, and in vitro and in vivo growth and virulence are severely attenuated. Moreover, double-mutant cells are more sensitive to vancomycin and amoxicillin-clavulanate.</text>
</comment>
<comment type="sequence caution" evidence="5">
    <conflict type="erroneous initiation">
        <sequence resource="EMBL-CDS" id="AAK44348"/>
    </conflict>
    <text>Truncated N-terminus.</text>
</comment>
<proteinExistence type="inferred from homology"/>
<reference key="1">
    <citation type="journal article" date="2002" name="J. Bacteriol.">
        <title>Whole-genome comparison of Mycobacterium tuberculosis clinical and laboratory strains.</title>
        <authorList>
            <person name="Fleischmann R.D."/>
            <person name="Alland D."/>
            <person name="Eisen J.A."/>
            <person name="Carpenter L."/>
            <person name="White O."/>
            <person name="Peterson J.D."/>
            <person name="DeBoy R.T."/>
            <person name="Dodson R.J."/>
            <person name="Gwinn M.L."/>
            <person name="Haft D.H."/>
            <person name="Hickey E.K."/>
            <person name="Kolonay J.F."/>
            <person name="Nelson W.C."/>
            <person name="Umayam L.A."/>
            <person name="Ermolaeva M.D."/>
            <person name="Salzberg S.L."/>
            <person name="Delcher A."/>
            <person name="Utterback T.R."/>
            <person name="Weidman J.F."/>
            <person name="Khouri H.M."/>
            <person name="Gill J."/>
            <person name="Mikula A."/>
            <person name="Bishai W."/>
            <person name="Jacobs W.R. Jr."/>
            <person name="Venter J.C."/>
            <person name="Fraser C.M."/>
        </authorList>
    </citation>
    <scope>NUCLEOTIDE SEQUENCE [LARGE SCALE GENOMIC DNA]</scope>
    <source>
        <strain>CDC 1551 / Oshkosh</strain>
    </source>
</reference>
<reference key="2">
    <citation type="journal article" date="2014" name="J. Bacteriol.">
        <title>Nonclassical transpeptidases of Mycobacterium tuberculosis alter cell size, morphology, the cytosolic matrix, protein localization, virulence, and resistance to beta-lactams.</title>
        <authorList>
            <person name="Schoonmaker M.K."/>
            <person name="Bishai W.R."/>
            <person name="Lamichhane G."/>
        </authorList>
    </citation>
    <scope>DISRUPTION PHENOTYPE</scope>
    <source>
        <strain>CDC 1551 / Oshkosh</strain>
    </source>
</reference>
<evidence type="ECO:0000250" key="1"/>
<evidence type="ECO:0000255" key="2"/>
<evidence type="ECO:0000255" key="3">
    <source>
        <dbReference type="PROSITE-ProRule" id="PRU01373"/>
    </source>
</evidence>
<evidence type="ECO:0000269" key="4">
    <source>
    </source>
</evidence>
<evidence type="ECO:0000305" key="5"/>